<reference key="1">
    <citation type="journal article" date="1996" name="Biochimie">
        <title>Molecular cloning and characterization of the pyrB gene of Lactobacillus leichmannii encoding aspartate transcarbamylase.</title>
        <authorList>
            <person name="Becker J."/>
            <person name="Brendel M."/>
        </authorList>
    </citation>
    <scope>NUCLEOTIDE SEQUENCE [GENOMIC DNA]</scope>
    <source>
        <strain>ATCC 4797 / DSM 20076 / BCRC 10699 / JCM 1148 / NBRC 3073 / NCIMB 7854 / 326 / F59</strain>
    </source>
</reference>
<reference key="2">
    <citation type="journal article" date="1995" name="Biochimie">
        <title>Cloning, sequencing, and characterizing the Lactobacillus leichmannii pyrC gene encoding dihydroorotase.</title>
        <authorList>
            <person name="Schenk-Groeninger R."/>
            <person name="Becker J."/>
            <person name="Brendel M."/>
        </authorList>
    </citation>
    <scope>NUCLEOTIDE SEQUENCE [GENOMIC DNA] OF 180-336</scope>
    <source>
        <strain>ATCC 4797 / DSM 20076 / BCRC 10699 / JCM 1148 / NBRC 3073 / NCIMB 7854 / 326 / F59</strain>
    </source>
</reference>
<comment type="function">
    <text evidence="1">Catalyzes the condensation of carbamoyl phosphate and aspartate to form carbamoyl aspartate and inorganic phosphate, the committed step in the de novo pyrimidine nucleotide biosynthesis pathway.</text>
</comment>
<comment type="catalytic activity">
    <reaction evidence="1">
        <text>carbamoyl phosphate + L-aspartate = N-carbamoyl-L-aspartate + phosphate + H(+)</text>
        <dbReference type="Rhea" id="RHEA:20013"/>
        <dbReference type="ChEBI" id="CHEBI:15378"/>
        <dbReference type="ChEBI" id="CHEBI:29991"/>
        <dbReference type="ChEBI" id="CHEBI:32814"/>
        <dbReference type="ChEBI" id="CHEBI:43474"/>
        <dbReference type="ChEBI" id="CHEBI:58228"/>
        <dbReference type="EC" id="2.1.3.2"/>
    </reaction>
</comment>
<comment type="pathway">
    <text evidence="1">Pyrimidine metabolism; UMP biosynthesis via de novo pathway; (S)-dihydroorotate from bicarbonate: step 2/3.</text>
</comment>
<comment type="subunit">
    <text evidence="1">Heterododecamer (2C3:3R2) of six catalytic PyrB chains organized as two trimers (C3), and six regulatory PyrI chains organized as three dimers (R2).</text>
</comment>
<comment type="similarity">
    <text evidence="1 2">Belongs to the aspartate/ornithine carbamoyltransferase superfamily. ATCase family.</text>
</comment>
<comment type="sequence caution" evidence="2">
    <conflict type="erroneous initiation">
        <sequence resource="EMBL-CDS" id="CAA59021"/>
    </conflict>
</comment>
<feature type="chain" id="PRO_0000113147" description="Aspartate carbamoyltransferase catalytic subunit">
    <location>
        <begin position="1"/>
        <end position="336"/>
    </location>
</feature>
<feature type="binding site" evidence="1">
    <location>
        <position position="72"/>
    </location>
    <ligand>
        <name>carbamoyl phosphate</name>
        <dbReference type="ChEBI" id="CHEBI:58228"/>
    </ligand>
</feature>
<feature type="binding site" evidence="1">
    <location>
        <position position="73"/>
    </location>
    <ligand>
        <name>carbamoyl phosphate</name>
        <dbReference type="ChEBI" id="CHEBI:58228"/>
    </ligand>
</feature>
<feature type="binding site" evidence="1">
    <location>
        <position position="100"/>
    </location>
    <ligand>
        <name>L-aspartate</name>
        <dbReference type="ChEBI" id="CHEBI:29991"/>
    </ligand>
</feature>
<feature type="binding site" evidence="1">
    <location>
        <position position="122"/>
    </location>
    <ligand>
        <name>carbamoyl phosphate</name>
        <dbReference type="ChEBI" id="CHEBI:58228"/>
    </ligand>
</feature>
<feature type="binding site" evidence="1">
    <location>
        <position position="155"/>
    </location>
    <ligand>
        <name>carbamoyl phosphate</name>
        <dbReference type="ChEBI" id="CHEBI:58228"/>
    </ligand>
</feature>
<feature type="binding site" evidence="1">
    <location>
        <position position="158"/>
    </location>
    <ligand>
        <name>carbamoyl phosphate</name>
        <dbReference type="ChEBI" id="CHEBI:58228"/>
    </ligand>
</feature>
<feature type="binding site" evidence="1">
    <location>
        <position position="188"/>
    </location>
    <ligand>
        <name>L-aspartate</name>
        <dbReference type="ChEBI" id="CHEBI:29991"/>
    </ligand>
</feature>
<feature type="binding site" evidence="1">
    <location>
        <position position="242"/>
    </location>
    <ligand>
        <name>L-aspartate</name>
        <dbReference type="ChEBI" id="CHEBI:29991"/>
    </ligand>
</feature>
<feature type="binding site" evidence="1">
    <location>
        <position position="288"/>
    </location>
    <ligand>
        <name>carbamoyl phosphate</name>
        <dbReference type="ChEBI" id="CHEBI:58228"/>
    </ligand>
</feature>
<feature type="binding site" evidence="1">
    <location>
        <position position="289"/>
    </location>
    <ligand>
        <name>carbamoyl phosphate</name>
        <dbReference type="ChEBI" id="CHEBI:58228"/>
    </ligand>
</feature>
<keyword id="KW-0665">Pyrimidine biosynthesis</keyword>
<keyword id="KW-0808">Transferase</keyword>
<protein>
    <recommendedName>
        <fullName evidence="1">Aspartate carbamoyltransferase catalytic subunit</fullName>
        <ecNumber evidence="1">2.1.3.2</ecNumber>
    </recommendedName>
    <alternativeName>
        <fullName evidence="1">Aspartate transcarbamylase</fullName>
        <shortName evidence="1">ATCase</shortName>
    </alternativeName>
</protein>
<sequence>MTTVSQNQVVVETEDKQDNLLRLPYFVSVEQLSADDVLHLLQRAQYFKNGGEVPALSRPIFCTNMFFENSTRTHTSFEVAERRLGLTVIPFDPSHSSVNKGENLYDTELTMASLGIELSVIRHPENAYYNEIIRPKEGQHLQMGLVNAGDGSGQHPSQSMLDMMTIYNEFGHFDGLKIMIVGDLTNSRVARSNMEILNTLGAEVYFSGPEYWYNAEEFSKYGTYVKNIDDEIPELDVLMLLRVQHERHNGAEAKTEQLFDAKDYNAAYGLNQRRYDMLKDDAIIMHPGPINRGVEWDGDLVEAPKSRYAVQMHNGVFVRMAMIEAVLRGRKLGGLE</sequence>
<accession>Q60252</accession>
<organism>
    <name type="scientific">Lactobacillus leichmannii</name>
    <dbReference type="NCBI Taxonomy" id="28039"/>
    <lineage>
        <taxon>Bacteria</taxon>
        <taxon>Bacillati</taxon>
        <taxon>Bacillota</taxon>
        <taxon>Bacilli</taxon>
        <taxon>Lactobacillales</taxon>
        <taxon>Lactobacillaceae</taxon>
        <taxon>Lactobacillus</taxon>
    </lineage>
</organism>
<proteinExistence type="inferred from homology"/>
<dbReference type="EC" id="2.1.3.2" evidence="1"/>
<dbReference type="EMBL" id="X84262">
    <property type="protein sequence ID" value="CAA59021.1"/>
    <property type="status" value="ALT_INIT"/>
    <property type="molecule type" value="Genomic_DNA"/>
</dbReference>
<dbReference type="EMBL" id="X78999">
    <property type="protein sequence ID" value="CAA55634.1"/>
    <property type="molecule type" value="Genomic_DNA"/>
</dbReference>
<dbReference type="PIR" id="T46956">
    <property type="entry name" value="T46956"/>
</dbReference>
<dbReference type="RefSeq" id="WP_035184388.1">
    <property type="nucleotide sequence ID" value="NZ_QOCY01000014.1"/>
</dbReference>
<dbReference type="SMR" id="Q60252"/>
<dbReference type="UniPathway" id="UPA00070">
    <property type="reaction ID" value="UER00116"/>
</dbReference>
<dbReference type="GO" id="GO:0005829">
    <property type="term" value="C:cytosol"/>
    <property type="evidence" value="ECO:0007669"/>
    <property type="project" value="TreeGrafter"/>
</dbReference>
<dbReference type="GO" id="GO:0016597">
    <property type="term" value="F:amino acid binding"/>
    <property type="evidence" value="ECO:0007669"/>
    <property type="project" value="InterPro"/>
</dbReference>
<dbReference type="GO" id="GO:0004070">
    <property type="term" value="F:aspartate carbamoyltransferase activity"/>
    <property type="evidence" value="ECO:0007669"/>
    <property type="project" value="UniProtKB-UniRule"/>
</dbReference>
<dbReference type="GO" id="GO:0006207">
    <property type="term" value="P:'de novo' pyrimidine nucleobase biosynthetic process"/>
    <property type="evidence" value="ECO:0007669"/>
    <property type="project" value="InterPro"/>
</dbReference>
<dbReference type="GO" id="GO:0044205">
    <property type="term" value="P:'de novo' UMP biosynthetic process"/>
    <property type="evidence" value="ECO:0007669"/>
    <property type="project" value="UniProtKB-UniRule"/>
</dbReference>
<dbReference type="GO" id="GO:0006520">
    <property type="term" value="P:amino acid metabolic process"/>
    <property type="evidence" value="ECO:0007669"/>
    <property type="project" value="InterPro"/>
</dbReference>
<dbReference type="FunFam" id="3.40.50.1370:FF:000011">
    <property type="entry name" value="Aspartate carbamoyltransferase"/>
    <property type="match status" value="1"/>
</dbReference>
<dbReference type="Gene3D" id="3.40.50.1370">
    <property type="entry name" value="Aspartate/ornithine carbamoyltransferase"/>
    <property type="match status" value="2"/>
</dbReference>
<dbReference type="HAMAP" id="MF_00001">
    <property type="entry name" value="Asp_carb_tr"/>
    <property type="match status" value="1"/>
</dbReference>
<dbReference type="InterPro" id="IPR006132">
    <property type="entry name" value="Asp/Orn_carbamoyltranf_P-bd"/>
</dbReference>
<dbReference type="InterPro" id="IPR006130">
    <property type="entry name" value="Asp/Orn_carbamoylTrfase"/>
</dbReference>
<dbReference type="InterPro" id="IPR036901">
    <property type="entry name" value="Asp/Orn_carbamoylTrfase_sf"/>
</dbReference>
<dbReference type="InterPro" id="IPR002082">
    <property type="entry name" value="Asp_carbamoyltransf"/>
</dbReference>
<dbReference type="InterPro" id="IPR006131">
    <property type="entry name" value="Asp_carbamoyltransf_Asp/Orn-bd"/>
</dbReference>
<dbReference type="NCBIfam" id="TIGR00670">
    <property type="entry name" value="asp_carb_tr"/>
    <property type="match status" value="1"/>
</dbReference>
<dbReference type="NCBIfam" id="NF002032">
    <property type="entry name" value="PRK00856.1"/>
    <property type="match status" value="1"/>
</dbReference>
<dbReference type="PANTHER" id="PTHR45753:SF6">
    <property type="entry name" value="ASPARTATE CARBAMOYLTRANSFERASE"/>
    <property type="match status" value="1"/>
</dbReference>
<dbReference type="PANTHER" id="PTHR45753">
    <property type="entry name" value="ORNITHINE CARBAMOYLTRANSFERASE, MITOCHONDRIAL"/>
    <property type="match status" value="1"/>
</dbReference>
<dbReference type="Pfam" id="PF00185">
    <property type="entry name" value="OTCace"/>
    <property type="match status" value="1"/>
</dbReference>
<dbReference type="Pfam" id="PF02729">
    <property type="entry name" value="OTCace_N"/>
    <property type="match status" value="1"/>
</dbReference>
<dbReference type="PRINTS" id="PR00100">
    <property type="entry name" value="AOTCASE"/>
</dbReference>
<dbReference type="PRINTS" id="PR00101">
    <property type="entry name" value="ATCASE"/>
</dbReference>
<dbReference type="SUPFAM" id="SSF53671">
    <property type="entry name" value="Aspartate/ornithine carbamoyltransferase"/>
    <property type="match status" value="1"/>
</dbReference>
<dbReference type="PROSITE" id="PS00097">
    <property type="entry name" value="CARBAMOYLTRANSFERASE"/>
    <property type="match status" value="1"/>
</dbReference>
<name>PYRB_LACLE</name>
<evidence type="ECO:0000255" key="1">
    <source>
        <dbReference type="HAMAP-Rule" id="MF_00001"/>
    </source>
</evidence>
<evidence type="ECO:0000305" key="2"/>
<gene>
    <name evidence="1" type="primary">pyrB</name>
</gene>